<comment type="catalytic activity">
    <reaction evidence="1">
        <text>2-formamido-N(1)-(5-O-phospho-beta-D-ribosyl)acetamidine + ATP = 5-amino-1-(5-phospho-beta-D-ribosyl)imidazole + ADP + phosphate + H(+)</text>
        <dbReference type="Rhea" id="RHEA:23032"/>
        <dbReference type="ChEBI" id="CHEBI:15378"/>
        <dbReference type="ChEBI" id="CHEBI:30616"/>
        <dbReference type="ChEBI" id="CHEBI:43474"/>
        <dbReference type="ChEBI" id="CHEBI:137981"/>
        <dbReference type="ChEBI" id="CHEBI:147287"/>
        <dbReference type="ChEBI" id="CHEBI:456216"/>
        <dbReference type="EC" id="6.3.3.1"/>
    </reaction>
</comment>
<comment type="pathway">
    <text evidence="1">Purine metabolism; IMP biosynthesis via de novo pathway; 5-amino-1-(5-phospho-D-ribosyl)imidazole from N(2)-formyl-N(1)-(5-phospho-D-ribosyl)glycinamide: step 2/2.</text>
</comment>
<comment type="subcellular location">
    <subcellularLocation>
        <location evidence="1">Cytoplasm</location>
    </subcellularLocation>
</comment>
<comment type="similarity">
    <text evidence="1">Belongs to the AIR synthase family.</text>
</comment>
<name>PUR5_XANCP</name>
<proteinExistence type="inferred from homology"/>
<sequence length="341" mass="35778">MTYRDAGVDIDAGNALVERIKPLVKRSFRPEVMGGLGGFGALFDLSGKYKEPVLVSGTDGVGTKLKLAQQLGRHDTIGIDLVGMCVNDVLVQGAEPLFFLDYFATGKLDIDTAAAVVGGIARGCELSGCALIGGETAEMPDMYPPGEYDLAGFTVGAVEKSQLLDGAQVREGDVLIGIASSGPHSNGYSLIRKIYERAGSPADLVLDDGVALIDALMAPTALYVKPILALLKSHGEAIHAMAHVTGGGLTENIIRVIPDGLGLDIDATAWILPPVFAWLQREGAVADAEMWRTFNCGIGFVLVAAPAQAAALEQALDAQSLAHWRIGQVVTAQGDERVRIG</sequence>
<gene>
    <name evidence="1" type="primary">purM</name>
    <name type="ordered locus">XCC2789</name>
</gene>
<feature type="chain" id="PRO_0000148275" description="Phosphoribosylformylglycinamidine cyclo-ligase">
    <location>
        <begin position="1"/>
        <end position="341"/>
    </location>
</feature>
<evidence type="ECO:0000255" key="1">
    <source>
        <dbReference type="HAMAP-Rule" id="MF_00741"/>
    </source>
</evidence>
<organism>
    <name type="scientific">Xanthomonas campestris pv. campestris (strain ATCC 33913 / DSM 3586 / NCPPB 528 / LMG 568 / P 25)</name>
    <dbReference type="NCBI Taxonomy" id="190485"/>
    <lineage>
        <taxon>Bacteria</taxon>
        <taxon>Pseudomonadati</taxon>
        <taxon>Pseudomonadota</taxon>
        <taxon>Gammaproteobacteria</taxon>
        <taxon>Lysobacterales</taxon>
        <taxon>Lysobacteraceae</taxon>
        <taxon>Xanthomonas</taxon>
    </lineage>
</organism>
<reference key="1">
    <citation type="journal article" date="2002" name="Nature">
        <title>Comparison of the genomes of two Xanthomonas pathogens with differing host specificities.</title>
        <authorList>
            <person name="da Silva A.C.R."/>
            <person name="Ferro J.A."/>
            <person name="Reinach F.C."/>
            <person name="Farah C.S."/>
            <person name="Furlan L.R."/>
            <person name="Quaggio R.B."/>
            <person name="Monteiro-Vitorello C.B."/>
            <person name="Van Sluys M.A."/>
            <person name="Almeida N.F. Jr."/>
            <person name="Alves L.M.C."/>
            <person name="do Amaral A.M."/>
            <person name="Bertolini M.C."/>
            <person name="Camargo L.E.A."/>
            <person name="Camarotte G."/>
            <person name="Cannavan F."/>
            <person name="Cardozo J."/>
            <person name="Chambergo F."/>
            <person name="Ciapina L.P."/>
            <person name="Cicarelli R.M.B."/>
            <person name="Coutinho L.L."/>
            <person name="Cursino-Santos J.R."/>
            <person name="El-Dorry H."/>
            <person name="Faria J.B."/>
            <person name="Ferreira A.J.S."/>
            <person name="Ferreira R.C.C."/>
            <person name="Ferro M.I.T."/>
            <person name="Formighieri E.F."/>
            <person name="Franco M.C."/>
            <person name="Greggio C.C."/>
            <person name="Gruber A."/>
            <person name="Katsuyama A.M."/>
            <person name="Kishi L.T."/>
            <person name="Leite R.P."/>
            <person name="Lemos E.G.M."/>
            <person name="Lemos M.V.F."/>
            <person name="Locali E.C."/>
            <person name="Machado M.A."/>
            <person name="Madeira A.M.B.N."/>
            <person name="Martinez-Rossi N.M."/>
            <person name="Martins E.C."/>
            <person name="Meidanis J."/>
            <person name="Menck C.F.M."/>
            <person name="Miyaki C.Y."/>
            <person name="Moon D.H."/>
            <person name="Moreira L.M."/>
            <person name="Novo M.T.M."/>
            <person name="Okura V.K."/>
            <person name="Oliveira M.C."/>
            <person name="Oliveira V.R."/>
            <person name="Pereira H.A."/>
            <person name="Rossi A."/>
            <person name="Sena J.A.D."/>
            <person name="Silva C."/>
            <person name="de Souza R.F."/>
            <person name="Spinola L.A.F."/>
            <person name="Takita M.A."/>
            <person name="Tamura R.E."/>
            <person name="Teixeira E.C."/>
            <person name="Tezza R.I.D."/>
            <person name="Trindade dos Santos M."/>
            <person name="Truffi D."/>
            <person name="Tsai S.M."/>
            <person name="White F.F."/>
            <person name="Setubal J.C."/>
            <person name="Kitajima J.P."/>
        </authorList>
    </citation>
    <scope>NUCLEOTIDE SEQUENCE [LARGE SCALE GENOMIC DNA]</scope>
    <source>
        <strain>ATCC 33913 / DSM 3586 / NCPPB 528 / LMG 568 / P 25</strain>
    </source>
</reference>
<keyword id="KW-0067">ATP-binding</keyword>
<keyword id="KW-0963">Cytoplasm</keyword>
<keyword id="KW-0436">Ligase</keyword>
<keyword id="KW-0547">Nucleotide-binding</keyword>
<keyword id="KW-0658">Purine biosynthesis</keyword>
<keyword id="KW-1185">Reference proteome</keyword>
<dbReference type="EC" id="6.3.3.1" evidence="1"/>
<dbReference type="EMBL" id="AE008922">
    <property type="protein sequence ID" value="AAM42061.1"/>
    <property type="molecule type" value="Genomic_DNA"/>
</dbReference>
<dbReference type="RefSeq" id="NP_638137.2">
    <property type="nucleotide sequence ID" value="NC_003902.1"/>
</dbReference>
<dbReference type="RefSeq" id="WP_029628894.1">
    <property type="nucleotide sequence ID" value="NC_003902.1"/>
</dbReference>
<dbReference type="SMR" id="Q8P725"/>
<dbReference type="STRING" id="190485.XCC2789"/>
<dbReference type="EnsemblBacteria" id="AAM42061">
    <property type="protein sequence ID" value="AAM42061"/>
    <property type="gene ID" value="XCC2789"/>
</dbReference>
<dbReference type="KEGG" id="xcc:XCC2789"/>
<dbReference type="PATRIC" id="fig|190485.4.peg.2977"/>
<dbReference type="eggNOG" id="COG0150">
    <property type="taxonomic scope" value="Bacteria"/>
</dbReference>
<dbReference type="HOGENOM" id="CLU_047116_0_0_6"/>
<dbReference type="OrthoDB" id="9777881at2"/>
<dbReference type="UniPathway" id="UPA00074">
    <property type="reaction ID" value="UER00129"/>
</dbReference>
<dbReference type="Proteomes" id="UP000001010">
    <property type="component" value="Chromosome"/>
</dbReference>
<dbReference type="GO" id="GO:0005829">
    <property type="term" value="C:cytosol"/>
    <property type="evidence" value="ECO:0000318"/>
    <property type="project" value="GO_Central"/>
</dbReference>
<dbReference type="GO" id="GO:0005524">
    <property type="term" value="F:ATP binding"/>
    <property type="evidence" value="ECO:0007669"/>
    <property type="project" value="UniProtKB-KW"/>
</dbReference>
<dbReference type="GO" id="GO:0004637">
    <property type="term" value="F:phosphoribosylamine-glycine ligase activity"/>
    <property type="evidence" value="ECO:0000318"/>
    <property type="project" value="GO_Central"/>
</dbReference>
<dbReference type="GO" id="GO:0004641">
    <property type="term" value="F:phosphoribosylformylglycinamidine cyclo-ligase activity"/>
    <property type="evidence" value="ECO:0000318"/>
    <property type="project" value="GO_Central"/>
</dbReference>
<dbReference type="GO" id="GO:0006189">
    <property type="term" value="P:'de novo' IMP biosynthetic process"/>
    <property type="evidence" value="ECO:0007669"/>
    <property type="project" value="UniProtKB-UniRule"/>
</dbReference>
<dbReference type="GO" id="GO:0046084">
    <property type="term" value="P:adenine biosynthetic process"/>
    <property type="evidence" value="ECO:0000318"/>
    <property type="project" value="GO_Central"/>
</dbReference>
<dbReference type="GO" id="GO:0006164">
    <property type="term" value="P:purine nucleotide biosynthetic process"/>
    <property type="evidence" value="ECO:0000318"/>
    <property type="project" value="GO_Central"/>
</dbReference>
<dbReference type="CDD" id="cd02196">
    <property type="entry name" value="PurM"/>
    <property type="match status" value="1"/>
</dbReference>
<dbReference type="FunFam" id="3.30.1330.10:FF:000001">
    <property type="entry name" value="Phosphoribosylformylglycinamidine cyclo-ligase"/>
    <property type="match status" value="1"/>
</dbReference>
<dbReference type="FunFam" id="3.90.650.10:FF:000001">
    <property type="entry name" value="Phosphoribosylformylglycinamidine cyclo-ligase"/>
    <property type="match status" value="1"/>
</dbReference>
<dbReference type="Gene3D" id="3.90.650.10">
    <property type="entry name" value="PurM-like C-terminal domain"/>
    <property type="match status" value="1"/>
</dbReference>
<dbReference type="Gene3D" id="3.30.1330.10">
    <property type="entry name" value="PurM-like, N-terminal domain"/>
    <property type="match status" value="1"/>
</dbReference>
<dbReference type="HAMAP" id="MF_00741">
    <property type="entry name" value="AIRS"/>
    <property type="match status" value="1"/>
</dbReference>
<dbReference type="InterPro" id="IPR010918">
    <property type="entry name" value="PurM-like_C_dom"/>
</dbReference>
<dbReference type="InterPro" id="IPR036676">
    <property type="entry name" value="PurM-like_C_sf"/>
</dbReference>
<dbReference type="InterPro" id="IPR016188">
    <property type="entry name" value="PurM-like_N"/>
</dbReference>
<dbReference type="InterPro" id="IPR036921">
    <property type="entry name" value="PurM-like_N_sf"/>
</dbReference>
<dbReference type="InterPro" id="IPR004733">
    <property type="entry name" value="PurM_cligase"/>
</dbReference>
<dbReference type="NCBIfam" id="TIGR00878">
    <property type="entry name" value="purM"/>
    <property type="match status" value="1"/>
</dbReference>
<dbReference type="PANTHER" id="PTHR10520:SF12">
    <property type="entry name" value="TRIFUNCTIONAL PURINE BIOSYNTHETIC PROTEIN ADENOSINE-3"/>
    <property type="match status" value="1"/>
</dbReference>
<dbReference type="PANTHER" id="PTHR10520">
    <property type="entry name" value="TRIFUNCTIONAL PURINE BIOSYNTHETIC PROTEIN ADENOSINE-3-RELATED"/>
    <property type="match status" value="1"/>
</dbReference>
<dbReference type="Pfam" id="PF00586">
    <property type="entry name" value="AIRS"/>
    <property type="match status" value="1"/>
</dbReference>
<dbReference type="Pfam" id="PF02769">
    <property type="entry name" value="AIRS_C"/>
    <property type="match status" value="1"/>
</dbReference>
<dbReference type="SUPFAM" id="SSF56042">
    <property type="entry name" value="PurM C-terminal domain-like"/>
    <property type="match status" value="1"/>
</dbReference>
<dbReference type="SUPFAM" id="SSF55326">
    <property type="entry name" value="PurM N-terminal domain-like"/>
    <property type="match status" value="1"/>
</dbReference>
<protein>
    <recommendedName>
        <fullName evidence="1">Phosphoribosylformylglycinamidine cyclo-ligase</fullName>
        <ecNumber evidence="1">6.3.3.1</ecNumber>
    </recommendedName>
    <alternativeName>
        <fullName evidence="1">AIR synthase</fullName>
    </alternativeName>
    <alternativeName>
        <fullName evidence="1">AIRS</fullName>
    </alternativeName>
    <alternativeName>
        <fullName evidence="1">Phosphoribosyl-aminoimidazole synthetase</fullName>
    </alternativeName>
</protein>
<accession>Q8P725</accession>